<sequence>MSQNEQQYLDLAQKILDEGSHKGDRTGTGTRSLFGTQMRFNLAEGFPLLTTKKVFFGLIKSELLWFLRGDNNIRFLLEHNNHIWDEWAFKKWIESDKYTGPDMTNFGLRSQTDENFAKIYKEQKDIFVNNILNDDEFKEEFGYIGNVYGKLWRSWETNSLTAGDETVDQVARLIDQIKETPNSRRLILTAWNAETTPQAPLPSCHVLSQFYVADGKLSLQMYQRSGDFFLGVPFNIASYSLLLHMVAAQTGYEVGEFIHTIGDTHIYNNHVDQITEQLSRPMHKLPKLWLNPEVKSLFDYTMDDIKILDYDSEPAIKAPVAV</sequence>
<dbReference type="EC" id="2.1.1.45" evidence="1"/>
<dbReference type="EMBL" id="CP000414">
    <property type="protein sequence ID" value="ABJ61574.1"/>
    <property type="molecule type" value="Genomic_DNA"/>
</dbReference>
<dbReference type="RefSeq" id="WP_011679304.1">
    <property type="nucleotide sequence ID" value="NC_008531.1"/>
</dbReference>
<dbReference type="SMR" id="Q03YZ8"/>
<dbReference type="EnsemblBacteria" id="ABJ61574">
    <property type="protein sequence ID" value="ABJ61574"/>
    <property type="gene ID" value="LEUM_0458"/>
</dbReference>
<dbReference type="GeneID" id="29576492"/>
<dbReference type="KEGG" id="lme:LEUM_0458"/>
<dbReference type="eggNOG" id="COG0207">
    <property type="taxonomic scope" value="Bacteria"/>
</dbReference>
<dbReference type="HOGENOM" id="CLU_021669_0_0_9"/>
<dbReference type="UniPathway" id="UPA00575"/>
<dbReference type="Proteomes" id="UP000000362">
    <property type="component" value="Chromosome"/>
</dbReference>
<dbReference type="GO" id="GO:0005829">
    <property type="term" value="C:cytosol"/>
    <property type="evidence" value="ECO:0007669"/>
    <property type="project" value="TreeGrafter"/>
</dbReference>
<dbReference type="GO" id="GO:0004799">
    <property type="term" value="F:thymidylate synthase activity"/>
    <property type="evidence" value="ECO:0007669"/>
    <property type="project" value="UniProtKB-UniRule"/>
</dbReference>
<dbReference type="GO" id="GO:0006231">
    <property type="term" value="P:dTMP biosynthetic process"/>
    <property type="evidence" value="ECO:0007669"/>
    <property type="project" value="UniProtKB-UniRule"/>
</dbReference>
<dbReference type="GO" id="GO:0006235">
    <property type="term" value="P:dTTP biosynthetic process"/>
    <property type="evidence" value="ECO:0007669"/>
    <property type="project" value="UniProtKB-UniRule"/>
</dbReference>
<dbReference type="GO" id="GO:0032259">
    <property type="term" value="P:methylation"/>
    <property type="evidence" value="ECO:0007669"/>
    <property type="project" value="UniProtKB-KW"/>
</dbReference>
<dbReference type="CDD" id="cd00351">
    <property type="entry name" value="TS_Pyrimidine_HMase"/>
    <property type="match status" value="1"/>
</dbReference>
<dbReference type="Gene3D" id="3.30.572.10">
    <property type="entry name" value="Thymidylate synthase/dCMP hydroxymethylase domain"/>
    <property type="match status" value="1"/>
</dbReference>
<dbReference type="HAMAP" id="MF_00008">
    <property type="entry name" value="Thymidy_synth_bact"/>
    <property type="match status" value="1"/>
</dbReference>
<dbReference type="InterPro" id="IPR045097">
    <property type="entry name" value="Thymidate_synth/dCMP_Mease"/>
</dbReference>
<dbReference type="InterPro" id="IPR023451">
    <property type="entry name" value="Thymidate_synth/dCMP_Mease_dom"/>
</dbReference>
<dbReference type="InterPro" id="IPR036926">
    <property type="entry name" value="Thymidate_synth/dCMP_Mease_sf"/>
</dbReference>
<dbReference type="InterPro" id="IPR000398">
    <property type="entry name" value="Thymidylate_synthase"/>
</dbReference>
<dbReference type="NCBIfam" id="NF002496">
    <property type="entry name" value="PRK01827.1-2"/>
    <property type="match status" value="1"/>
</dbReference>
<dbReference type="NCBIfam" id="TIGR03284">
    <property type="entry name" value="thym_sym"/>
    <property type="match status" value="1"/>
</dbReference>
<dbReference type="PANTHER" id="PTHR11548:SF9">
    <property type="entry name" value="THYMIDYLATE SYNTHASE"/>
    <property type="match status" value="1"/>
</dbReference>
<dbReference type="PANTHER" id="PTHR11548">
    <property type="entry name" value="THYMIDYLATE SYNTHASE 1"/>
    <property type="match status" value="1"/>
</dbReference>
<dbReference type="Pfam" id="PF00303">
    <property type="entry name" value="Thymidylat_synt"/>
    <property type="match status" value="1"/>
</dbReference>
<dbReference type="PRINTS" id="PR00108">
    <property type="entry name" value="THYMDSNTHASE"/>
</dbReference>
<dbReference type="SUPFAM" id="SSF55831">
    <property type="entry name" value="Thymidylate synthase/dCMP hydroxymethylase"/>
    <property type="match status" value="1"/>
</dbReference>
<accession>Q03YZ8</accession>
<gene>
    <name evidence="1" type="primary">thyA</name>
    <name type="ordered locus">LEUM_0458</name>
</gene>
<protein>
    <recommendedName>
        <fullName evidence="1">Thymidylate synthase</fullName>
        <shortName evidence="1">TS</shortName>
        <shortName evidence="1">TSase</shortName>
        <ecNumber evidence="1">2.1.1.45</ecNumber>
    </recommendedName>
</protein>
<comment type="function">
    <text evidence="1">Catalyzes the reductive methylation of 2'-deoxyuridine-5'-monophosphate (dUMP) to 2'-deoxythymidine-5'-monophosphate (dTMP) while utilizing 5,10-methylenetetrahydrofolate (mTHF) as the methyl donor and reductant in the reaction, yielding dihydrofolate (DHF) as a by-product. This enzymatic reaction provides an intracellular de novo source of dTMP, an essential precursor for DNA biosynthesis.</text>
</comment>
<comment type="catalytic activity">
    <reaction evidence="1">
        <text>dUMP + (6R)-5,10-methylene-5,6,7,8-tetrahydrofolate = 7,8-dihydrofolate + dTMP</text>
        <dbReference type="Rhea" id="RHEA:12104"/>
        <dbReference type="ChEBI" id="CHEBI:15636"/>
        <dbReference type="ChEBI" id="CHEBI:57451"/>
        <dbReference type="ChEBI" id="CHEBI:63528"/>
        <dbReference type="ChEBI" id="CHEBI:246422"/>
        <dbReference type="EC" id="2.1.1.45"/>
    </reaction>
</comment>
<comment type="pathway">
    <text evidence="1">Pyrimidine metabolism; dTTP biosynthesis.</text>
</comment>
<comment type="subunit">
    <text evidence="1">Homodimer.</text>
</comment>
<comment type="subcellular location">
    <subcellularLocation>
        <location evidence="1">Cytoplasm</location>
    </subcellularLocation>
</comment>
<comment type="similarity">
    <text evidence="1">Belongs to the thymidylate synthase family. Bacterial-type ThyA subfamily.</text>
</comment>
<name>TYSY_LEUMM</name>
<reference key="1">
    <citation type="journal article" date="2006" name="Proc. Natl. Acad. Sci. U.S.A.">
        <title>Comparative genomics of the lactic acid bacteria.</title>
        <authorList>
            <person name="Makarova K.S."/>
            <person name="Slesarev A."/>
            <person name="Wolf Y.I."/>
            <person name="Sorokin A."/>
            <person name="Mirkin B."/>
            <person name="Koonin E.V."/>
            <person name="Pavlov A."/>
            <person name="Pavlova N."/>
            <person name="Karamychev V."/>
            <person name="Polouchine N."/>
            <person name="Shakhova V."/>
            <person name="Grigoriev I."/>
            <person name="Lou Y."/>
            <person name="Rohksar D."/>
            <person name="Lucas S."/>
            <person name="Huang K."/>
            <person name="Goodstein D.M."/>
            <person name="Hawkins T."/>
            <person name="Plengvidhya V."/>
            <person name="Welker D."/>
            <person name="Hughes J."/>
            <person name="Goh Y."/>
            <person name="Benson A."/>
            <person name="Baldwin K."/>
            <person name="Lee J.-H."/>
            <person name="Diaz-Muniz I."/>
            <person name="Dosti B."/>
            <person name="Smeianov V."/>
            <person name="Wechter W."/>
            <person name="Barabote R."/>
            <person name="Lorca G."/>
            <person name="Altermann E."/>
            <person name="Barrangou R."/>
            <person name="Ganesan B."/>
            <person name="Xie Y."/>
            <person name="Rawsthorne H."/>
            <person name="Tamir D."/>
            <person name="Parker C."/>
            <person name="Breidt F."/>
            <person name="Broadbent J.R."/>
            <person name="Hutkins R."/>
            <person name="O'Sullivan D."/>
            <person name="Steele J."/>
            <person name="Unlu G."/>
            <person name="Saier M.H. Jr."/>
            <person name="Klaenhammer T."/>
            <person name="Richardson P."/>
            <person name="Kozyavkin S."/>
            <person name="Weimer B.C."/>
            <person name="Mills D.A."/>
        </authorList>
    </citation>
    <scope>NUCLEOTIDE SEQUENCE [LARGE SCALE GENOMIC DNA]</scope>
    <source>
        <strain>ATCC 8293 / DSM 20343 / BCRC 11652 / CCM 1803 / JCM 6124 / NCDO 523 / NBRC 100496 / NCIMB 8023 / NCTC 12954 / NRRL B-1118 / 37Y</strain>
    </source>
</reference>
<feature type="chain" id="PRO_1000000621" description="Thymidylate synthase">
    <location>
        <begin position="1"/>
        <end position="322"/>
    </location>
</feature>
<feature type="active site" description="Nucleophile" evidence="1">
    <location>
        <position position="204"/>
    </location>
</feature>
<feature type="binding site" description="in other chain" evidence="1">
    <location>
        <position position="25"/>
    </location>
    <ligand>
        <name>dUMP</name>
        <dbReference type="ChEBI" id="CHEBI:246422"/>
        <note>ligand shared between dimeric partners</note>
    </ligand>
</feature>
<feature type="binding site" evidence="1">
    <location>
        <begin position="184"/>
        <end position="185"/>
    </location>
    <ligand>
        <name>dUMP</name>
        <dbReference type="ChEBI" id="CHEBI:246422"/>
        <note>ligand shared between dimeric partners</note>
    </ligand>
</feature>
<feature type="binding site" description="in other chain" evidence="1">
    <location>
        <begin position="224"/>
        <end position="227"/>
    </location>
    <ligand>
        <name>dUMP</name>
        <dbReference type="ChEBI" id="CHEBI:246422"/>
        <note>ligand shared between dimeric partners</note>
    </ligand>
</feature>
<feature type="binding site" evidence="1">
    <location>
        <position position="227"/>
    </location>
    <ligand>
        <name>(6R)-5,10-methylene-5,6,7,8-tetrahydrofolate</name>
        <dbReference type="ChEBI" id="CHEBI:15636"/>
    </ligand>
</feature>
<feature type="binding site" description="in other chain" evidence="1">
    <location>
        <position position="235"/>
    </location>
    <ligand>
        <name>dUMP</name>
        <dbReference type="ChEBI" id="CHEBI:246422"/>
        <note>ligand shared between dimeric partners</note>
    </ligand>
</feature>
<feature type="binding site" description="in other chain" evidence="1">
    <location>
        <begin position="265"/>
        <end position="267"/>
    </location>
    <ligand>
        <name>dUMP</name>
        <dbReference type="ChEBI" id="CHEBI:246422"/>
        <note>ligand shared between dimeric partners</note>
    </ligand>
</feature>
<feature type="binding site" evidence="1">
    <location>
        <position position="321"/>
    </location>
    <ligand>
        <name>(6R)-5,10-methylene-5,6,7,8-tetrahydrofolate</name>
        <dbReference type="ChEBI" id="CHEBI:15636"/>
    </ligand>
</feature>
<organism>
    <name type="scientific">Leuconostoc mesenteroides subsp. mesenteroides (strain ATCC 8293 / DSM 20343 / BCRC 11652 / CCM 1803 / JCM 6124 / NCDO 523 / NBRC 100496 / NCIMB 8023 / NCTC 12954 / NRRL B-1118 / 37Y)</name>
    <dbReference type="NCBI Taxonomy" id="203120"/>
    <lineage>
        <taxon>Bacteria</taxon>
        <taxon>Bacillati</taxon>
        <taxon>Bacillota</taxon>
        <taxon>Bacilli</taxon>
        <taxon>Lactobacillales</taxon>
        <taxon>Lactobacillaceae</taxon>
        <taxon>Leuconostoc</taxon>
    </lineage>
</organism>
<keyword id="KW-0963">Cytoplasm</keyword>
<keyword id="KW-0489">Methyltransferase</keyword>
<keyword id="KW-0545">Nucleotide biosynthesis</keyword>
<keyword id="KW-1185">Reference proteome</keyword>
<keyword id="KW-0808">Transferase</keyword>
<evidence type="ECO:0000255" key="1">
    <source>
        <dbReference type="HAMAP-Rule" id="MF_00008"/>
    </source>
</evidence>
<proteinExistence type="inferred from homology"/>